<comment type="function">
    <text evidence="1 3 4">Catalyzes the transfer of endogenously produced octanoic acid from octanoyl-acyl-carrier-protein onto the lipoyl domains of lipoate-dependent enzymes. Lipoyl-ACP can also act as a substrate although octanoyl-ACP is likely to be the physiological substrate.</text>
</comment>
<comment type="catalytic activity">
    <reaction evidence="1">
        <text>octanoyl-[ACP] + L-lysyl-[protein] = N(6)-octanoyl-L-lysyl-[protein] + holo-[ACP] + H(+)</text>
        <dbReference type="Rhea" id="RHEA:17665"/>
        <dbReference type="Rhea" id="RHEA-COMP:9636"/>
        <dbReference type="Rhea" id="RHEA-COMP:9685"/>
        <dbReference type="Rhea" id="RHEA-COMP:9752"/>
        <dbReference type="Rhea" id="RHEA-COMP:9928"/>
        <dbReference type="ChEBI" id="CHEBI:15378"/>
        <dbReference type="ChEBI" id="CHEBI:29969"/>
        <dbReference type="ChEBI" id="CHEBI:64479"/>
        <dbReference type="ChEBI" id="CHEBI:78463"/>
        <dbReference type="ChEBI" id="CHEBI:78809"/>
        <dbReference type="EC" id="2.3.1.181"/>
    </reaction>
</comment>
<comment type="biophysicochemical properties">
    <kinetics>
        <KM evidence="3">10.2 uM for octanoyl-ACP</KM>
        <KM evidence="3">13.2 uM for apo-H protein</KM>
    </kinetics>
    <phDependence>
        <text evidence="3">Optimum pH is about 7.5.</text>
    </phDependence>
</comment>
<comment type="pathway">
    <text evidence="1">Protein modification; protein lipoylation via endogenous pathway; protein N(6)-(lipoyl)lysine from octanoyl-[acyl-carrier-protein]: step 1/2.</text>
</comment>
<comment type="subunit">
    <text evidence="3">Monomer or homotrimer. Both forms are active.</text>
</comment>
<comment type="subcellular location">
    <subcellularLocation>
        <location evidence="1">Cytoplasm</location>
    </subcellularLocation>
</comment>
<comment type="mass spectrometry"/>
<comment type="miscellaneous">
    <text>In the reaction, the free carboxyl group of octanoic acid is attached via an amide linkage to the epsilon-amino group of a specific lysine residue of lipoyl domains of lipoate-dependent enzymes.</text>
</comment>
<comment type="similarity">
    <text evidence="1">Belongs to the LipB family.</text>
</comment>
<comment type="sequence caution" evidence="5">
    <conflict type="erroneous initiation">
        <sequence resource="EMBL-CDS" id="AAA66342"/>
    </conflict>
    <text>Truncated N-terminus.</text>
</comment>
<comment type="sequence caution" evidence="5">
    <conflict type="erroneous initiation">
        <sequence resource="EMBL-CDS" id="AAB40830"/>
    </conflict>
    <text>Truncated N-terminus.</text>
</comment>
<feature type="chain" id="PRO_0000062834" description="Octanoyltransferase">
    <location>
        <begin position="1"/>
        <end position="213"/>
    </location>
</feature>
<feature type="domain" description="BPL/LPL catalytic" evidence="2">
    <location>
        <begin position="32"/>
        <end position="207"/>
    </location>
</feature>
<feature type="active site" description="Acyl-thioester intermediate">
    <location>
        <position position="169"/>
    </location>
</feature>
<feature type="binding site" evidence="1">
    <location>
        <begin position="71"/>
        <end position="78"/>
    </location>
    <ligand>
        <name>substrate</name>
    </ligand>
</feature>
<feature type="binding site" evidence="1">
    <location>
        <begin position="138"/>
        <end position="140"/>
    </location>
    <ligand>
        <name>substrate</name>
    </ligand>
</feature>
<feature type="binding site" evidence="1">
    <location>
        <begin position="151"/>
        <end position="153"/>
    </location>
    <ligand>
        <name>substrate</name>
    </ligand>
</feature>
<feature type="site" description="Lowers pKa of active site Cys" evidence="1">
    <location>
        <position position="135"/>
    </location>
</feature>
<feature type="mutagenesis site" description="No effect on activity.">
    <original>C</original>
    <variation>A</variation>
    <location>
        <position position="137"/>
    </location>
</feature>
<feature type="mutagenesis site" description="No effect on activity.">
    <original>C</original>
    <variation>A</variation>
    <location>
        <position position="147"/>
    </location>
</feature>
<feature type="mutagenesis site" description="1% of wild-type activity." evidence="4">
    <original>C</original>
    <variation>A</variation>
    <location>
        <position position="169"/>
    </location>
</feature>
<feature type="mutagenesis site" description="Loss of activity." evidence="4">
    <original>C</original>
    <variation>S</variation>
    <location>
        <position position="169"/>
    </location>
</feature>
<feature type="sequence conflict" description="In Ref. 1; AAA66342." evidence="5" ref="1">
    <original>S</original>
    <variation>D</variation>
    <location>
        <position position="33"/>
    </location>
</feature>
<sequence>MYQDKILVRQLGLQPYEPISQAMHEFTDTRDDSTLDEIWLVEHYPVFTQGQAGKAEHILMPGDIPVIQSDRGGQVTYHGPGQQVMYVLLNLKRRKLGVRELVTLLEQTVVNTLAELGIEAHPRADAPGVYVGEKKICSLGLRIRRGCSFHGLALNVNMDLSPFLRINPCGYAGMEMAKISQWKPEATTNNIAPRLLENILALLNNPDFEYITA</sequence>
<organism>
    <name type="scientific">Escherichia coli (strain K12)</name>
    <dbReference type="NCBI Taxonomy" id="83333"/>
    <lineage>
        <taxon>Bacteria</taxon>
        <taxon>Pseudomonadati</taxon>
        <taxon>Pseudomonadota</taxon>
        <taxon>Gammaproteobacteria</taxon>
        <taxon>Enterobacterales</taxon>
        <taxon>Enterobacteriaceae</taxon>
        <taxon>Escherichia</taxon>
    </lineage>
</organism>
<gene>
    <name evidence="1" type="primary">lipB</name>
    <name type="ordered locus">b0630</name>
    <name type="ordered locus">JW5089</name>
</gene>
<reference key="1">
    <citation type="journal article" date="1993" name="J. Bacteriol.">
        <title>Lipoic acid metabolism in Escherichia coli: sequencing and functional characterization of the lipA and lipB genes.</title>
        <authorList>
            <person name="Reed K.E."/>
            <person name="Cronan J.E. Jr."/>
        </authorList>
    </citation>
    <scope>NUCLEOTIDE SEQUENCE [GENOMIC DNA]</scope>
    <source>
        <strain>K12 / W3110 / ATCC 27325 / DSM 5911</strain>
    </source>
</reference>
<reference key="2">
    <citation type="journal article" date="1996" name="DNA Res.">
        <title>A 718-kb DNA sequence of the Escherichia coli K-12 genome corresponding to the 12.7-28.0 min region on the linkage map.</title>
        <authorList>
            <person name="Oshima T."/>
            <person name="Aiba H."/>
            <person name="Baba T."/>
            <person name="Fujita K."/>
            <person name="Hayashi K."/>
            <person name="Honjo A."/>
            <person name="Ikemoto K."/>
            <person name="Inada T."/>
            <person name="Itoh T."/>
            <person name="Kajihara M."/>
            <person name="Kanai K."/>
            <person name="Kashimoto K."/>
            <person name="Kimura S."/>
            <person name="Kitagawa M."/>
            <person name="Makino K."/>
            <person name="Masuda S."/>
            <person name="Miki T."/>
            <person name="Mizobuchi K."/>
            <person name="Mori H."/>
            <person name="Motomura K."/>
            <person name="Nakamura Y."/>
            <person name="Nashimoto H."/>
            <person name="Nishio Y."/>
            <person name="Saito N."/>
            <person name="Sampei G."/>
            <person name="Seki Y."/>
            <person name="Tagami H."/>
            <person name="Takemoto K."/>
            <person name="Wada C."/>
            <person name="Yamamoto Y."/>
            <person name="Yano M."/>
            <person name="Horiuchi T."/>
        </authorList>
    </citation>
    <scope>NUCLEOTIDE SEQUENCE [LARGE SCALE GENOMIC DNA]</scope>
    <source>
        <strain>K12 / W3110 / ATCC 27325 / DSM 5911</strain>
    </source>
</reference>
<reference key="3">
    <citation type="submission" date="1997-01" db="EMBL/GenBank/DDBJ databases">
        <title>Sequence of minutes 4-25 of Escherichia coli.</title>
        <authorList>
            <person name="Chung E."/>
            <person name="Allen E."/>
            <person name="Araujo R."/>
            <person name="Aparicio A.M."/>
            <person name="Davis K."/>
            <person name="Duncan M."/>
            <person name="Federspiel N."/>
            <person name="Hyman R."/>
            <person name="Kalman S."/>
            <person name="Komp C."/>
            <person name="Kurdi O."/>
            <person name="Lew H."/>
            <person name="Lin D."/>
            <person name="Namath A."/>
            <person name="Oefner P."/>
            <person name="Roberts D."/>
            <person name="Schramm S."/>
            <person name="Davis R.W."/>
        </authorList>
    </citation>
    <scope>NUCLEOTIDE SEQUENCE [LARGE SCALE GENOMIC DNA]</scope>
    <source>
        <strain>K12 / MG1655 / ATCC 47076</strain>
    </source>
</reference>
<reference key="4">
    <citation type="journal article" date="1997" name="Science">
        <title>The complete genome sequence of Escherichia coli K-12.</title>
        <authorList>
            <person name="Blattner F.R."/>
            <person name="Plunkett G. III"/>
            <person name="Bloch C.A."/>
            <person name="Perna N.T."/>
            <person name="Burland V."/>
            <person name="Riley M."/>
            <person name="Collado-Vides J."/>
            <person name="Glasner J.D."/>
            <person name="Rode C.K."/>
            <person name="Mayhew G.F."/>
            <person name="Gregor J."/>
            <person name="Davis N.W."/>
            <person name="Kirkpatrick H.A."/>
            <person name="Goeden M.A."/>
            <person name="Rose D.J."/>
            <person name="Mau B."/>
            <person name="Shao Y."/>
        </authorList>
    </citation>
    <scope>NUCLEOTIDE SEQUENCE [LARGE SCALE GENOMIC DNA]</scope>
    <source>
        <strain>K12 / MG1655 / ATCC 47076</strain>
    </source>
</reference>
<reference key="5">
    <citation type="journal article" date="2006" name="Mol. Syst. Biol.">
        <title>Highly accurate genome sequences of Escherichia coli K-12 strains MG1655 and W3110.</title>
        <authorList>
            <person name="Hayashi K."/>
            <person name="Morooka N."/>
            <person name="Yamamoto Y."/>
            <person name="Fujita K."/>
            <person name="Isono K."/>
            <person name="Choi S."/>
            <person name="Ohtsubo E."/>
            <person name="Baba T."/>
            <person name="Wanner B.L."/>
            <person name="Mori H."/>
            <person name="Horiuchi T."/>
        </authorList>
    </citation>
    <scope>NUCLEOTIDE SEQUENCE [LARGE SCALE GENOMIC DNA]</scope>
    <source>
        <strain>K12 / W3110 / ATCC 27325 / DSM 5911</strain>
    </source>
</reference>
<reference key="6">
    <citation type="journal article" date="1995" name="J. Bacteriol.">
        <title>Lipoic acid metabolism in Escherichia coli: the lplA and lipB genes define redundant pathways for ligation of lipoyl groups to apoprotein.</title>
        <authorList>
            <person name="Morris T.W."/>
            <person name="Reed K.E."/>
            <person name="Cronan J.E. Jr."/>
        </authorList>
    </citation>
    <scope>CHARACTERIZATION</scope>
    <source>
        <strain>K12 / JK1</strain>
    </source>
</reference>
<reference key="7">
    <citation type="journal article" date="2003" name="J. Bacteriol.">
        <title>The Escherichia coli lipB gene encodes lipoyl (octanoyl)-acyl carrier protein:protein transferase.</title>
        <authorList>
            <person name="Jordan S.W."/>
            <person name="Cronan J.E. Jr."/>
        </authorList>
    </citation>
    <scope>CHARACTERIZATION</scope>
    <source>
        <strain>K12 / JK1</strain>
    </source>
</reference>
<reference key="8">
    <citation type="journal article" date="2005" name="Biochemistry">
        <title>The reaction of LipB, the octanoyl-[acyl carrier protein]:protein N-octanoyltransferase of lipoic acid synthesis, proceeds through an acyl-enzyme intermediate.</title>
        <authorList>
            <person name="Zhao X."/>
            <person name="Miller J.R."/>
            <person name="Cronan J.E. Jr."/>
        </authorList>
    </citation>
    <scope>FUNCTION</scope>
    <scope>REACTION INTERMEDIATE</scope>
    <scope>MUTAGENESIS OF CYS-169</scope>
    <scope>IDENTIFICATION BY MASS SPECTROMETRY</scope>
    <source>
        <strain>K12 / JK1</strain>
    </source>
</reference>
<reference key="9">
    <citation type="journal article" date="2005" name="Protein Expr. Purif.">
        <title>Expression, purification, and physical characterization of Escherichia coli lipoyl(octanoyl)transferase.</title>
        <authorList>
            <person name="Nesbitt N.M."/>
            <person name="Baleanu-Gogonea C."/>
            <person name="Cicchillo R.M."/>
            <person name="Goodson K."/>
            <person name="Iwig D.F."/>
            <person name="Broadwater J.A."/>
            <person name="Haas J.A."/>
            <person name="Fox B.G."/>
            <person name="Booker S.J."/>
        </authorList>
    </citation>
    <scope>FUNCTION</scope>
    <scope>CHARACTERIZATION</scope>
    <scope>BIOPHYSICOCHEMICAL PROPERTIES</scope>
    <scope>MASS SPECTROMETRY</scope>
    <scope>SUBUNIT</scope>
    <source>
        <strain>K12 / W3110 / ATCC 27325 / DSM 5911</strain>
    </source>
</reference>
<evidence type="ECO:0000255" key="1">
    <source>
        <dbReference type="HAMAP-Rule" id="MF_00013"/>
    </source>
</evidence>
<evidence type="ECO:0000255" key="2">
    <source>
        <dbReference type="PROSITE-ProRule" id="PRU01067"/>
    </source>
</evidence>
<evidence type="ECO:0000269" key="3">
    <source>
    </source>
</evidence>
<evidence type="ECO:0000269" key="4">
    <source>
    </source>
</evidence>
<evidence type="ECO:0000305" key="5"/>
<dbReference type="EC" id="2.3.1.181" evidence="1"/>
<dbReference type="EMBL" id="L07636">
    <property type="protein sequence ID" value="AAA66342.1"/>
    <property type="status" value="ALT_INIT"/>
    <property type="molecule type" value="Genomic_DNA"/>
</dbReference>
<dbReference type="EMBL" id="U82598">
    <property type="protein sequence ID" value="AAB40830.1"/>
    <property type="status" value="ALT_INIT"/>
    <property type="molecule type" value="Genomic_DNA"/>
</dbReference>
<dbReference type="EMBL" id="U00096">
    <property type="protein sequence ID" value="AAC73731.2"/>
    <property type="molecule type" value="Genomic_DNA"/>
</dbReference>
<dbReference type="EMBL" id="AP009048">
    <property type="protein sequence ID" value="BAA35273.2"/>
    <property type="molecule type" value="Genomic_DNA"/>
</dbReference>
<dbReference type="PIR" id="D64797">
    <property type="entry name" value="D64797"/>
</dbReference>
<dbReference type="RefSeq" id="NP_415163.2">
    <property type="nucleotide sequence ID" value="NC_000913.3"/>
</dbReference>
<dbReference type="RefSeq" id="WP_000284027.1">
    <property type="nucleotide sequence ID" value="NZ_STEB01000031.1"/>
</dbReference>
<dbReference type="SMR" id="P60720"/>
<dbReference type="BioGRID" id="4261534">
    <property type="interactions" value="39"/>
</dbReference>
<dbReference type="FunCoup" id="P60720">
    <property type="interactions" value="534"/>
</dbReference>
<dbReference type="STRING" id="511145.b0630"/>
<dbReference type="jPOST" id="P60720"/>
<dbReference type="PaxDb" id="511145-b0630"/>
<dbReference type="EnsemblBacteria" id="AAC73731">
    <property type="protein sequence ID" value="AAC73731"/>
    <property type="gene ID" value="b0630"/>
</dbReference>
<dbReference type="GeneID" id="93776852"/>
<dbReference type="GeneID" id="945217"/>
<dbReference type="KEGG" id="ecj:JW5089"/>
<dbReference type="KEGG" id="eco:b0630"/>
<dbReference type="KEGG" id="ecoc:C3026_03150"/>
<dbReference type="PATRIC" id="fig|1411691.4.peg.1638"/>
<dbReference type="EchoBASE" id="EB1283"/>
<dbReference type="eggNOG" id="COG0321">
    <property type="taxonomic scope" value="Bacteria"/>
</dbReference>
<dbReference type="HOGENOM" id="CLU_035168_3_1_6"/>
<dbReference type="InParanoid" id="P60720"/>
<dbReference type="OMA" id="GEVTYHC"/>
<dbReference type="OrthoDB" id="9787061at2"/>
<dbReference type="PhylomeDB" id="P60720"/>
<dbReference type="BioCyc" id="EcoCyc:EG11591-MONOMER"/>
<dbReference type="BioCyc" id="MetaCyc:EG11591-MONOMER"/>
<dbReference type="UniPathway" id="UPA00538">
    <property type="reaction ID" value="UER00592"/>
</dbReference>
<dbReference type="PRO" id="PR:P60720"/>
<dbReference type="Proteomes" id="UP000000625">
    <property type="component" value="Chromosome"/>
</dbReference>
<dbReference type="GO" id="GO:0005737">
    <property type="term" value="C:cytoplasm"/>
    <property type="evidence" value="ECO:0007669"/>
    <property type="project" value="UniProtKB-SubCell"/>
</dbReference>
<dbReference type="GO" id="GO:0003824">
    <property type="term" value="F:catalytic activity"/>
    <property type="evidence" value="ECO:0000314"/>
    <property type="project" value="EcoliWiki"/>
</dbReference>
<dbReference type="GO" id="GO:0033819">
    <property type="term" value="F:lipoyl(octanoyl) transferase activity"/>
    <property type="evidence" value="ECO:0000314"/>
    <property type="project" value="EcoCyc"/>
</dbReference>
<dbReference type="GO" id="GO:0016740">
    <property type="term" value="F:transferase activity"/>
    <property type="evidence" value="ECO:0000314"/>
    <property type="project" value="EcoliWiki"/>
</dbReference>
<dbReference type="GO" id="GO:0009107">
    <property type="term" value="P:lipoate biosynthetic process"/>
    <property type="evidence" value="ECO:0000315"/>
    <property type="project" value="EcoliWiki"/>
</dbReference>
<dbReference type="GO" id="GO:0009106">
    <property type="term" value="P:lipoate metabolic process"/>
    <property type="evidence" value="ECO:0000315"/>
    <property type="project" value="EcoliWiki"/>
</dbReference>
<dbReference type="GO" id="GO:0010629">
    <property type="term" value="P:negative regulation of gene expression"/>
    <property type="evidence" value="ECO:0000315"/>
    <property type="project" value="EcoliWiki"/>
</dbReference>
<dbReference type="GO" id="GO:0036211">
    <property type="term" value="P:protein modification process"/>
    <property type="evidence" value="ECO:0000314"/>
    <property type="project" value="EcoliWiki"/>
</dbReference>
<dbReference type="CDD" id="cd16444">
    <property type="entry name" value="LipB"/>
    <property type="match status" value="1"/>
</dbReference>
<dbReference type="FunFam" id="3.30.930.10:FF:000020">
    <property type="entry name" value="Octanoyltransferase"/>
    <property type="match status" value="1"/>
</dbReference>
<dbReference type="Gene3D" id="3.30.930.10">
    <property type="entry name" value="Bira Bifunctional Protein, Domain 2"/>
    <property type="match status" value="1"/>
</dbReference>
<dbReference type="HAMAP" id="MF_00013">
    <property type="entry name" value="LipB"/>
    <property type="match status" value="1"/>
</dbReference>
<dbReference type="InterPro" id="IPR045864">
    <property type="entry name" value="aa-tRNA-synth_II/BPL/LPL"/>
</dbReference>
<dbReference type="InterPro" id="IPR004143">
    <property type="entry name" value="BPL_LPL_catalytic"/>
</dbReference>
<dbReference type="InterPro" id="IPR000544">
    <property type="entry name" value="Octanoyltransferase"/>
</dbReference>
<dbReference type="InterPro" id="IPR020605">
    <property type="entry name" value="Octanoyltransferase_CS"/>
</dbReference>
<dbReference type="NCBIfam" id="TIGR00214">
    <property type="entry name" value="lipB"/>
    <property type="match status" value="1"/>
</dbReference>
<dbReference type="NCBIfam" id="NF010922">
    <property type="entry name" value="PRK14342.1"/>
    <property type="match status" value="1"/>
</dbReference>
<dbReference type="PANTHER" id="PTHR10993:SF7">
    <property type="entry name" value="LIPOYLTRANSFERASE 2, MITOCHONDRIAL-RELATED"/>
    <property type="match status" value="1"/>
</dbReference>
<dbReference type="PANTHER" id="PTHR10993">
    <property type="entry name" value="OCTANOYLTRANSFERASE"/>
    <property type="match status" value="1"/>
</dbReference>
<dbReference type="Pfam" id="PF21948">
    <property type="entry name" value="LplA-B_cat"/>
    <property type="match status" value="1"/>
</dbReference>
<dbReference type="PIRSF" id="PIRSF016262">
    <property type="entry name" value="LPLase"/>
    <property type="match status" value="1"/>
</dbReference>
<dbReference type="SUPFAM" id="SSF55681">
    <property type="entry name" value="Class II aaRS and biotin synthetases"/>
    <property type="match status" value="1"/>
</dbReference>
<dbReference type="PROSITE" id="PS51733">
    <property type="entry name" value="BPL_LPL_CATALYTIC"/>
    <property type="match status" value="1"/>
</dbReference>
<dbReference type="PROSITE" id="PS01313">
    <property type="entry name" value="LIPB"/>
    <property type="match status" value="1"/>
</dbReference>
<protein>
    <recommendedName>
        <fullName evidence="1">Octanoyltransferase</fullName>
        <ecNumber evidence="1">2.3.1.181</ecNumber>
    </recommendedName>
    <alternativeName>
        <fullName evidence="1">Lipoate-protein ligase B</fullName>
    </alternativeName>
    <alternativeName>
        <fullName evidence="1">Lipoyl/octanoyl transferase</fullName>
    </alternativeName>
    <alternativeName>
        <fullName evidence="1">Octanoyl-[acyl-carrier-protein]-protein N-octanoyltransferase</fullName>
    </alternativeName>
</protein>
<accession>P60720</accession>
<accession>P30976</accession>
<accession>P77684</accession>
<accession>Q8XBQ2</accession>
<proteinExistence type="evidence at protein level"/>
<keyword id="KW-0012">Acyltransferase</keyword>
<keyword id="KW-0963">Cytoplasm</keyword>
<keyword id="KW-1185">Reference proteome</keyword>
<keyword id="KW-0808">Transferase</keyword>
<name>LIPB_ECOLI</name>